<accession>Q3YZU8</accession>
<organism>
    <name type="scientific">Shigella sonnei (strain Ss046)</name>
    <dbReference type="NCBI Taxonomy" id="300269"/>
    <lineage>
        <taxon>Bacteria</taxon>
        <taxon>Pseudomonadati</taxon>
        <taxon>Pseudomonadota</taxon>
        <taxon>Gammaproteobacteria</taxon>
        <taxon>Enterobacterales</taxon>
        <taxon>Enterobacteriaceae</taxon>
        <taxon>Shigella</taxon>
    </lineage>
</organism>
<feature type="chain" id="PRO_0000382020" description="Probable 4-amino-4-deoxy-L-arabinose-phosphoundecaprenol flippase subunit ArnF">
    <location>
        <begin position="1"/>
        <end position="128"/>
    </location>
</feature>
<feature type="topological domain" description="Cytoplasmic" evidence="1">
    <location>
        <begin position="1"/>
        <end position="2"/>
    </location>
</feature>
<feature type="transmembrane region" description="Helical" evidence="1">
    <location>
        <begin position="3"/>
        <end position="23"/>
    </location>
</feature>
<feature type="topological domain" description="Periplasmic" evidence="1">
    <location>
        <begin position="24"/>
        <end position="35"/>
    </location>
</feature>
<feature type="transmembrane region" description="Helical" evidence="1">
    <location>
        <begin position="36"/>
        <end position="56"/>
    </location>
</feature>
<feature type="topological domain" description="Cytoplasmic" evidence="1">
    <location>
        <begin position="57"/>
        <end position="76"/>
    </location>
</feature>
<feature type="transmembrane region" description="Helical" evidence="1">
    <location>
        <begin position="77"/>
        <end position="97"/>
    </location>
</feature>
<feature type="topological domain" description="Periplasmic" evidence="1">
    <location>
        <begin position="98"/>
        <end position="100"/>
    </location>
</feature>
<feature type="transmembrane region" description="Helical" evidence="1">
    <location>
        <begin position="101"/>
        <end position="121"/>
    </location>
</feature>
<feature type="topological domain" description="Cytoplasmic" evidence="1">
    <location>
        <begin position="122"/>
        <end position="128"/>
    </location>
</feature>
<keyword id="KW-0997">Cell inner membrane</keyword>
<keyword id="KW-1003">Cell membrane</keyword>
<keyword id="KW-0441">Lipid A biosynthesis</keyword>
<keyword id="KW-0444">Lipid biosynthesis</keyword>
<keyword id="KW-0443">Lipid metabolism</keyword>
<keyword id="KW-0448">Lipopolysaccharide biosynthesis</keyword>
<keyword id="KW-0472">Membrane</keyword>
<keyword id="KW-1185">Reference proteome</keyword>
<keyword id="KW-0812">Transmembrane</keyword>
<keyword id="KW-1133">Transmembrane helix</keyword>
<keyword id="KW-0813">Transport</keyword>
<gene>
    <name evidence="1" type="primary">arnF</name>
    <name type="ordered locus">SSON_2319</name>
</gene>
<proteinExistence type="inferred from homology"/>
<reference key="1">
    <citation type="journal article" date="2005" name="Nucleic Acids Res.">
        <title>Genome dynamics and diversity of Shigella species, the etiologic agents of bacillary dysentery.</title>
        <authorList>
            <person name="Yang F."/>
            <person name="Yang J."/>
            <person name="Zhang X."/>
            <person name="Chen L."/>
            <person name="Jiang Y."/>
            <person name="Yan Y."/>
            <person name="Tang X."/>
            <person name="Wang J."/>
            <person name="Xiong Z."/>
            <person name="Dong J."/>
            <person name="Xue Y."/>
            <person name="Zhu Y."/>
            <person name="Xu X."/>
            <person name="Sun L."/>
            <person name="Chen S."/>
            <person name="Nie H."/>
            <person name="Peng J."/>
            <person name="Xu J."/>
            <person name="Wang Y."/>
            <person name="Yuan Z."/>
            <person name="Wen Y."/>
            <person name="Yao Z."/>
            <person name="Shen Y."/>
            <person name="Qiang B."/>
            <person name="Hou Y."/>
            <person name="Yu J."/>
            <person name="Jin Q."/>
        </authorList>
    </citation>
    <scope>NUCLEOTIDE SEQUENCE [LARGE SCALE GENOMIC DNA]</scope>
    <source>
        <strain>Ss046</strain>
    </source>
</reference>
<name>ARNF_SHISS</name>
<sequence>MGLMWGLFSVIIASVAQLSLGFAASHLPPMTHLWDFIAALLAFGLDARILLLGLLGYLLSVFCWYKTLHKLALSKAYALLSMSYVLVWIASMVLPGWEGTFSLKALLGVACIMSGLMLIFLPTTKQRY</sequence>
<evidence type="ECO:0000255" key="1">
    <source>
        <dbReference type="HAMAP-Rule" id="MF_00538"/>
    </source>
</evidence>
<evidence type="ECO:0000305" key="2"/>
<comment type="function">
    <text evidence="1">Translocates 4-amino-4-deoxy-L-arabinose-phosphoundecaprenol (alpha-L-Ara4N-phosphoundecaprenol) from the cytoplasmic to the periplasmic side of the inner membrane.</text>
</comment>
<comment type="pathway">
    <text evidence="1">Bacterial outer membrane biogenesis; lipopolysaccharide biosynthesis.</text>
</comment>
<comment type="subunit">
    <text evidence="1">Heterodimer of ArnE and ArnF.</text>
</comment>
<comment type="subcellular location">
    <subcellularLocation>
        <location evidence="1">Cell inner membrane</location>
        <topology evidence="1">Multi-pass membrane protein</topology>
    </subcellularLocation>
</comment>
<comment type="similarity">
    <text evidence="1">Belongs to the ArnF family.</text>
</comment>
<comment type="sequence caution" evidence="2">
    <conflict type="erroneous initiation">
        <sequence resource="EMBL-CDS" id="AAZ88964"/>
    </conflict>
</comment>
<dbReference type="EMBL" id="CP000038">
    <property type="protein sequence ID" value="AAZ88964.1"/>
    <property type="status" value="ALT_INIT"/>
    <property type="molecule type" value="Genomic_DNA"/>
</dbReference>
<dbReference type="RefSeq" id="WP_000523880.1">
    <property type="nucleotide sequence ID" value="NC_007384.1"/>
</dbReference>
<dbReference type="GeneID" id="93774915"/>
<dbReference type="KEGG" id="ssn:SSON_2319"/>
<dbReference type="HOGENOM" id="CLU_1243704_0_0_6"/>
<dbReference type="UniPathway" id="UPA00030"/>
<dbReference type="Proteomes" id="UP000002529">
    <property type="component" value="Chromosome"/>
</dbReference>
<dbReference type="GO" id="GO:0005886">
    <property type="term" value="C:plasma membrane"/>
    <property type="evidence" value="ECO:0007669"/>
    <property type="project" value="UniProtKB-SubCell"/>
</dbReference>
<dbReference type="GO" id="GO:1901505">
    <property type="term" value="F:carbohydrate derivative transmembrane transporter activity"/>
    <property type="evidence" value="ECO:0007669"/>
    <property type="project" value="InterPro"/>
</dbReference>
<dbReference type="GO" id="GO:0009245">
    <property type="term" value="P:lipid A biosynthetic process"/>
    <property type="evidence" value="ECO:0007669"/>
    <property type="project" value="UniProtKB-UniRule"/>
</dbReference>
<dbReference type="GO" id="GO:0009103">
    <property type="term" value="P:lipopolysaccharide biosynthetic process"/>
    <property type="evidence" value="ECO:0007669"/>
    <property type="project" value="UniProtKB-UniRule"/>
</dbReference>
<dbReference type="FunFam" id="1.10.3730.20:FF:000003">
    <property type="entry name" value="Probable 4-amino-4-deoxy-L-arabinose-phosphoundecaprenol flippase subunit ArnF"/>
    <property type="match status" value="1"/>
</dbReference>
<dbReference type="Gene3D" id="1.10.3730.20">
    <property type="match status" value="1"/>
</dbReference>
<dbReference type="HAMAP" id="MF_00538">
    <property type="entry name" value="Flippase_ArnF"/>
    <property type="match status" value="1"/>
</dbReference>
<dbReference type="InterPro" id="IPR022832">
    <property type="entry name" value="Flippase_ArnF"/>
</dbReference>
<dbReference type="InterPro" id="IPR000390">
    <property type="entry name" value="Small_drug/metabolite_transptr"/>
</dbReference>
<dbReference type="NCBIfam" id="NF002816">
    <property type="entry name" value="PRK02971.1-2"/>
    <property type="match status" value="1"/>
</dbReference>
<dbReference type="PANTHER" id="PTHR30561:SF9">
    <property type="entry name" value="4-AMINO-4-DEOXY-L-ARABINOSE-PHOSPHOUNDECAPRENOL FLIPPASE SUBUNIT ARNF-RELATED"/>
    <property type="match status" value="1"/>
</dbReference>
<dbReference type="PANTHER" id="PTHR30561">
    <property type="entry name" value="SMR FAMILY PROTON-DEPENDENT DRUG EFFLUX TRANSPORTER SUGE"/>
    <property type="match status" value="1"/>
</dbReference>
<dbReference type="SUPFAM" id="SSF103481">
    <property type="entry name" value="Multidrug resistance efflux transporter EmrE"/>
    <property type="match status" value="1"/>
</dbReference>
<protein>
    <recommendedName>
        <fullName evidence="1">Probable 4-amino-4-deoxy-L-arabinose-phosphoundecaprenol flippase subunit ArnF</fullName>
        <shortName evidence="1">L-Ara4N-phosphoundecaprenol flippase subunit ArnF</shortName>
    </recommendedName>
    <alternativeName>
        <fullName evidence="1">Undecaprenyl phosphate-aminoarabinose flippase subunit ArnF</fullName>
    </alternativeName>
</protein>